<reference key="1">
    <citation type="journal article" date="1995" name="J. Mol. Biol.">
        <title>The DNA sequence of equine herpesvirus 2.</title>
        <authorList>
            <person name="Telford E.A.R."/>
            <person name="Watson M.S."/>
            <person name="Aird H.C."/>
            <person name="Perry J."/>
            <person name="Davison A.J."/>
        </authorList>
    </citation>
    <scope>NUCLEOTIDE SEQUENCE [LARGE SCALE GENOMIC DNA]</scope>
</reference>
<reference key="2">
    <citation type="journal article" date="1997" name="Nature">
        <title>Viral FLICE-inhibitory proteins (FLIPs) prevent apoptosis induced by death receptors.</title>
        <authorList>
            <person name="Thome M."/>
            <person name="Schneider P."/>
            <person name="Hofmann K."/>
            <person name="Fickenscher H."/>
            <person name="Meinl E."/>
            <person name="Neipel F."/>
            <person name="Mattmann C."/>
            <person name="Burns K."/>
            <person name="Bodmer J.-L."/>
            <person name="Schroeter M."/>
            <person name="Scaffidi C."/>
            <person name="Krammer P.H."/>
            <person name="Peter M.E."/>
            <person name="Tschopp J."/>
        </authorList>
    </citation>
    <scope>FUNCTION</scope>
</reference>
<reference key="3">
    <citation type="journal article" date="1997" name="Proc. Natl. Acad. Sci. U.S.A.">
        <title>Death effector domain-containing herpesvirus and poxvirus proteins inhibit both Fas- and TNFR1-induced apoptosis.</title>
        <authorList>
            <person name="Bertin J."/>
            <person name="Armstrong R.C."/>
            <person name="Ottilie S."/>
            <person name="Martin D.A."/>
            <person name="Wang Y."/>
            <person name="Banks S."/>
            <person name="Wang G.-H."/>
            <person name="Senkevich T.G."/>
            <person name="Alnemri E.S."/>
            <person name="Moss B."/>
            <person name="Lenardo M.J."/>
            <person name="Tomaselli K.J."/>
            <person name="Cohen J.I."/>
        </authorList>
    </citation>
    <scope>FUNCTION</scope>
</reference>
<protein>
    <recommendedName>
        <fullName>Viral CASP8 and FADD-like apoptosis regulator</fullName>
        <shortName>v-CFLAR</shortName>
    </recommendedName>
    <alternativeName>
        <fullName>Viral FLICE-inhibitory protein</fullName>
        <shortName>v-FLIP</shortName>
    </alternativeName>
</protein>
<keyword id="KW-0053">Apoptosis</keyword>
<keyword id="KW-0945">Host-virus interaction</keyword>
<keyword id="KW-1082">Inhibition of host apoptosis by viral FLIP-like protein</keyword>
<keyword id="KW-1119">Modulation of host cell apoptosis by virus</keyword>
<keyword id="KW-1185">Reference proteome</keyword>
<keyword id="KW-0677">Repeat</keyword>
<comment type="function">
    <text evidence="2 3">Inhibits TNFRSF1A, TNFRSF6, TNFRSF10 and TNFRSF12 induced apoptosis. May interfere with caspase-8 recruitment and activation at the death-inducing signaling complex (DISC). May lead to higher virus production and contribute to virus persistence and oncogenicity.</text>
</comment>
<comment type="subunit">
    <text>Associates with the death-inducing signaling complex (DISC) formed by TNFRSF6, FADD and caspase-8. Interacts with FADD.</text>
</comment>
<dbReference type="EMBL" id="U20824">
    <property type="protein sequence ID" value="AAC13862.1"/>
    <property type="molecule type" value="Genomic_DNA"/>
</dbReference>
<dbReference type="PIR" id="S55668">
    <property type="entry name" value="S55668"/>
</dbReference>
<dbReference type="RefSeq" id="NP_042671.1">
    <property type="nucleotide sequence ID" value="NC_001650.2"/>
</dbReference>
<dbReference type="SMR" id="Q66674"/>
<dbReference type="GeneID" id="1461077"/>
<dbReference type="KEGG" id="vg:1461077"/>
<dbReference type="Proteomes" id="UP000007083">
    <property type="component" value="Segment"/>
</dbReference>
<dbReference type="GO" id="GO:0042981">
    <property type="term" value="P:regulation of apoptotic process"/>
    <property type="evidence" value="ECO:0007669"/>
    <property type="project" value="InterPro"/>
</dbReference>
<dbReference type="GO" id="GO:0052150">
    <property type="term" value="P:symbiont-mediated perturbation of host apoptosis"/>
    <property type="evidence" value="ECO:0007669"/>
    <property type="project" value="UniProtKB-KW"/>
</dbReference>
<dbReference type="Gene3D" id="1.10.533.10">
    <property type="entry name" value="Death Domain, Fas"/>
    <property type="match status" value="2"/>
</dbReference>
<dbReference type="InterPro" id="IPR011029">
    <property type="entry name" value="DEATH-like_dom_sf"/>
</dbReference>
<dbReference type="InterPro" id="IPR001875">
    <property type="entry name" value="DED_dom"/>
</dbReference>
<dbReference type="PANTHER" id="PTHR48169:SF7">
    <property type="entry name" value="CASPASE 10"/>
    <property type="match status" value="1"/>
</dbReference>
<dbReference type="PANTHER" id="PTHR48169">
    <property type="entry name" value="DED DOMAIN-CONTAINING PROTEIN"/>
    <property type="match status" value="1"/>
</dbReference>
<dbReference type="Pfam" id="PF01335">
    <property type="entry name" value="DED"/>
    <property type="match status" value="1"/>
</dbReference>
<dbReference type="SMART" id="SM00031">
    <property type="entry name" value="DED"/>
    <property type="match status" value="2"/>
</dbReference>
<dbReference type="SUPFAM" id="SSF47986">
    <property type="entry name" value="DEATH domain"/>
    <property type="match status" value="1"/>
</dbReference>
<dbReference type="PROSITE" id="PS50168">
    <property type="entry name" value="DED"/>
    <property type="match status" value="2"/>
</dbReference>
<organismHost>
    <name type="scientific">Equus caballus</name>
    <name type="common">Horse</name>
    <dbReference type="NCBI Taxonomy" id="9796"/>
</organismHost>
<name>CFLA_EHV2</name>
<gene>
    <name type="ORF">E8</name>
</gene>
<evidence type="ECO:0000255" key="1">
    <source>
        <dbReference type="PROSITE-ProRule" id="PRU00065"/>
    </source>
</evidence>
<evidence type="ECO:0000269" key="2">
    <source>
    </source>
</evidence>
<evidence type="ECO:0000269" key="3">
    <source>
    </source>
</evidence>
<feature type="chain" id="PRO_0000072820" description="Viral CASP8 and FADD-like apoptosis regulator">
    <location>
        <begin position="1"/>
        <end position="171"/>
    </location>
</feature>
<feature type="domain" description="DED 1" evidence="1">
    <location>
        <begin position="1"/>
        <end position="74"/>
    </location>
</feature>
<feature type="domain" description="DED 2" evidence="1">
    <location>
        <begin position="92"/>
        <end position="171"/>
    </location>
</feature>
<organism>
    <name type="scientific">Equine herpesvirus 2 (strain 86/87)</name>
    <name type="common">EHV-2</name>
    <dbReference type="NCBI Taxonomy" id="82831"/>
    <lineage>
        <taxon>Viruses</taxon>
        <taxon>Duplodnaviria</taxon>
        <taxon>Heunggongvirae</taxon>
        <taxon>Peploviricota</taxon>
        <taxon>Herviviricetes</taxon>
        <taxon>Herpesvirales</taxon>
        <taxon>Orthoherpesviridae</taxon>
        <taxon>Gammaherpesvirinae</taxon>
        <taxon>Percavirus</taxon>
        <taxon>Percavirus equidgamma2</taxon>
        <taxon>Equid gammaherpesvirus 2</taxon>
    </lineage>
</organism>
<accession>Q66674</accession>
<proteinExistence type="predicted"/>
<sequence length="171" mass="19925">MSHYSMIDTYFSLDEDETETYLYLCRDLLKNKGEFQCTRDAFKFLSDYACLSAANQMELLFRVGRLDLIRRIFGQTWTPDSCPRYYMPICSPFRCLMALVNDFLSDKEVEEMYFLCAPRLESHLEPGSKKSFLRLASLLEDLELLGGDKLTFLRHLLTTIGRADLVKNLQV</sequence>